<evidence type="ECO:0000255" key="1">
    <source>
        <dbReference type="HAMAP-Rule" id="MF_01366"/>
    </source>
</evidence>
<evidence type="ECO:0000305" key="2"/>
<protein>
    <recommendedName>
        <fullName evidence="1">Large ribosomal subunit protein uL13</fullName>
    </recommendedName>
    <alternativeName>
        <fullName evidence="2">50S ribosomal protein L13</fullName>
    </alternativeName>
</protein>
<organism>
    <name type="scientific">Mycobacteroides abscessus (strain ATCC 19977 / DSM 44196 / CCUG 20993 / CIP 104536 / JCM 13569 / NCTC 13031 / TMC 1543 / L948)</name>
    <name type="common">Mycobacterium abscessus</name>
    <dbReference type="NCBI Taxonomy" id="561007"/>
    <lineage>
        <taxon>Bacteria</taxon>
        <taxon>Bacillati</taxon>
        <taxon>Actinomycetota</taxon>
        <taxon>Actinomycetes</taxon>
        <taxon>Mycobacteriales</taxon>
        <taxon>Mycobacteriaceae</taxon>
        <taxon>Mycobacteroides</taxon>
        <taxon>Mycobacteroides abscessus</taxon>
    </lineage>
</organism>
<accession>B1MG81</accession>
<reference key="1">
    <citation type="journal article" date="2009" name="PLoS ONE">
        <title>Non mycobacterial virulence genes in the genome of the emerging pathogen Mycobacterium abscessus.</title>
        <authorList>
            <person name="Ripoll F."/>
            <person name="Pasek S."/>
            <person name="Schenowitz C."/>
            <person name="Dossat C."/>
            <person name="Barbe V."/>
            <person name="Rottman M."/>
            <person name="Macheras E."/>
            <person name="Heym B."/>
            <person name="Herrmann J.L."/>
            <person name="Daffe M."/>
            <person name="Brosch R."/>
            <person name="Risler J.L."/>
            <person name="Gaillard J.L."/>
        </authorList>
    </citation>
    <scope>NUCLEOTIDE SEQUENCE [LARGE SCALE GENOMIC DNA]</scope>
    <source>
        <strain>ATCC 19977 / DSM 44196 / CCUG 20993 / CIP 104536 / JCM 13569 / NCTC 13031 / TMC 1543 / L948</strain>
    </source>
</reference>
<sequence length="147" mass="16183">MPTYTPKAGDVTRTWYVIDATDVVLGRLAVQAANLLRGKHKPTFAPHVDGGDFVIIINAEKIALSGNKLTNKFAYRHSGFPGGLSKRSIGEQLEKFPTRTVEKAIVGMLPKNKLGRQIERKLKVYAGAEHPHAAQQPIPFEIKQVAQ</sequence>
<feature type="chain" id="PRO_1000144154" description="Large ribosomal subunit protein uL13">
    <location>
        <begin position="1"/>
        <end position="147"/>
    </location>
</feature>
<proteinExistence type="inferred from homology"/>
<comment type="function">
    <text evidence="1">This protein is one of the early assembly proteins of the 50S ribosomal subunit, although it is not seen to bind rRNA by itself. It is important during the early stages of 50S assembly.</text>
</comment>
<comment type="subunit">
    <text evidence="1">Part of the 50S ribosomal subunit.</text>
</comment>
<comment type="similarity">
    <text evidence="1">Belongs to the universal ribosomal protein uL13 family.</text>
</comment>
<dbReference type="EMBL" id="CU458896">
    <property type="protein sequence ID" value="CAM63826.1"/>
    <property type="molecule type" value="Genomic_DNA"/>
</dbReference>
<dbReference type="RefSeq" id="WP_005056000.1">
    <property type="nucleotide sequence ID" value="NZ_MLCG01000001.1"/>
</dbReference>
<dbReference type="SMR" id="B1MG81"/>
<dbReference type="GeneID" id="93380691"/>
<dbReference type="KEGG" id="mab:MAB_3752c"/>
<dbReference type="Proteomes" id="UP000007137">
    <property type="component" value="Chromosome"/>
</dbReference>
<dbReference type="GO" id="GO:0022625">
    <property type="term" value="C:cytosolic large ribosomal subunit"/>
    <property type="evidence" value="ECO:0007669"/>
    <property type="project" value="TreeGrafter"/>
</dbReference>
<dbReference type="GO" id="GO:0003729">
    <property type="term" value="F:mRNA binding"/>
    <property type="evidence" value="ECO:0007669"/>
    <property type="project" value="TreeGrafter"/>
</dbReference>
<dbReference type="GO" id="GO:0003735">
    <property type="term" value="F:structural constituent of ribosome"/>
    <property type="evidence" value="ECO:0007669"/>
    <property type="project" value="InterPro"/>
</dbReference>
<dbReference type="GO" id="GO:0017148">
    <property type="term" value="P:negative regulation of translation"/>
    <property type="evidence" value="ECO:0007669"/>
    <property type="project" value="TreeGrafter"/>
</dbReference>
<dbReference type="GO" id="GO:0006412">
    <property type="term" value="P:translation"/>
    <property type="evidence" value="ECO:0007669"/>
    <property type="project" value="UniProtKB-UniRule"/>
</dbReference>
<dbReference type="CDD" id="cd00392">
    <property type="entry name" value="Ribosomal_L13"/>
    <property type="match status" value="1"/>
</dbReference>
<dbReference type="FunFam" id="3.90.1180.10:FF:000001">
    <property type="entry name" value="50S ribosomal protein L13"/>
    <property type="match status" value="1"/>
</dbReference>
<dbReference type="Gene3D" id="3.90.1180.10">
    <property type="entry name" value="Ribosomal protein L13"/>
    <property type="match status" value="1"/>
</dbReference>
<dbReference type="HAMAP" id="MF_01366">
    <property type="entry name" value="Ribosomal_uL13"/>
    <property type="match status" value="1"/>
</dbReference>
<dbReference type="InterPro" id="IPR005822">
    <property type="entry name" value="Ribosomal_uL13"/>
</dbReference>
<dbReference type="InterPro" id="IPR005823">
    <property type="entry name" value="Ribosomal_uL13_bac-type"/>
</dbReference>
<dbReference type="InterPro" id="IPR023563">
    <property type="entry name" value="Ribosomal_uL13_CS"/>
</dbReference>
<dbReference type="InterPro" id="IPR036899">
    <property type="entry name" value="Ribosomal_uL13_sf"/>
</dbReference>
<dbReference type="NCBIfam" id="TIGR01066">
    <property type="entry name" value="rplM_bact"/>
    <property type="match status" value="1"/>
</dbReference>
<dbReference type="PANTHER" id="PTHR11545:SF2">
    <property type="entry name" value="LARGE RIBOSOMAL SUBUNIT PROTEIN UL13M"/>
    <property type="match status" value="1"/>
</dbReference>
<dbReference type="PANTHER" id="PTHR11545">
    <property type="entry name" value="RIBOSOMAL PROTEIN L13"/>
    <property type="match status" value="1"/>
</dbReference>
<dbReference type="Pfam" id="PF00572">
    <property type="entry name" value="Ribosomal_L13"/>
    <property type="match status" value="1"/>
</dbReference>
<dbReference type="PIRSF" id="PIRSF002181">
    <property type="entry name" value="Ribosomal_L13"/>
    <property type="match status" value="1"/>
</dbReference>
<dbReference type="SUPFAM" id="SSF52161">
    <property type="entry name" value="Ribosomal protein L13"/>
    <property type="match status" value="1"/>
</dbReference>
<dbReference type="PROSITE" id="PS00783">
    <property type="entry name" value="RIBOSOMAL_L13"/>
    <property type="match status" value="1"/>
</dbReference>
<name>RL13_MYCA9</name>
<keyword id="KW-1185">Reference proteome</keyword>
<keyword id="KW-0687">Ribonucleoprotein</keyword>
<keyword id="KW-0689">Ribosomal protein</keyword>
<gene>
    <name evidence="1" type="primary">rplM</name>
    <name type="ordered locus">MAB_3752c</name>
</gene>